<gene>
    <name evidence="1" type="primary">eno</name>
    <name type="ordered locus">Swol_0276</name>
</gene>
<accession>Q0B080</accession>
<feature type="chain" id="PRO_0000267127" description="Enolase">
    <location>
        <begin position="1"/>
        <end position="425"/>
    </location>
</feature>
<feature type="active site" description="Proton donor" evidence="1">
    <location>
        <position position="205"/>
    </location>
</feature>
<feature type="active site" description="Proton acceptor" evidence="1">
    <location>
        <position position="337"/>
    </location>
</feature>
<feature type="binding site" evidence="1">
    <location>
        <position position="163"/>
    </location>
    <ligand>
        <name>(2R)-2-phosphoglycerate</name>
        <dbReference type="ChEBI" id="CHEBI:58289"/>
    </ligand>
</feature>
<feature type="binding site" evidence="1">
    <location>
        <position position="242"/>
    </location>
    <ligand>
        <name>Mg(2+)</name>
        <dbReference type="ChEBI" id="CHEBI:18420"/>
    </ligand>
</feature>
<feature type="binding site" evidence="1">
    <location>
        <position position="285"/>
    </location>
    <ligand>
        <name>Mg(2+)</name>
        <dbReference type="ChEBI" id="CHEBI:18420"/>
    </ligand>
</feature>
<feature type="binding site" evidence="1">
    <location>
        <position position="312"/>
    </location>
    <ligand>
        <name>Mg(2+)</name>
        <dbReference type="ChEBI" id="CHEBI:18420"/>
    </ligand>
</feature>
<feature type="binding site" evidence="1">
    <location>
        <position position="337"/>
    </location>
    <ligand>
        <name>(2R)-2-phosphoglycerate</name>
        <dbReference type="ChEBI" id="CHEBI:58289"/>
    </ligand>
</feature>
<feature type="binding site" evidence="1">
    <location>
        <position position="366"/>
    </location>
    <ligand>
        <name>(2R)-2-phosphoglycerate</name>
        <dbReference type="ChEBI" id="CHEBI:58289"/>
    </ligand>
</feature>
<feature type="binding site" evidence="1">
    <location>
        <position position="367"/>
    </location>
    <ligand>
        <name>(2R)-2-phosphoglycerate</name>
        <dbReference type="ChEBI" id="CHEBI:58289"/>
    </ligand>
</feature>
<feature type="binding site" evidence="1">
    <location>
        <position position="388"/>
    </location>
    <ligand>
        <name>(2R)-2-phosphoglycerate</name>
        <dbReference type="ChEBI" id="CHEBI:58289"/>
    </ligand>
</feature>
<protein>
    <recommendedName>
        <fullName evidence="1">Enolase</fullName>
        <ecNumber evidence="1">4.2.1.11</ecNumber>
    </recommendedName>
    <alternativeName>
        <fullName evidence="1">2-phospho-D-glycerate hydro-lyase</fullName>
    </alternativeName>
    <alternativeName>
        <fullName evidence="1">2-phosphoglycerate dehydratase</fullName>
    </alternativeName>
</protein>
<keyword id="KW-0963">Cytoplasm</keyword>
<keyword id="KW-0324">Glycolysis</keyword>
<keyword id="KW-0456">Lyase</keyword>
<keyword id="KW-0460">Magnesium</keyword>
<keyword id="KW-0479">Metal-binding</keyword>
<keyword id="KW-1185">Reference proteome</keyword>
<keyword id="KW-0964">Secreted</keyword>
<name>ENO_SYNWW</name>
<sequence>MSTIVDVFAREVLDSRGNPTVEVEVFLEDGTMGRAIVPSGASTGAHEAVELRDGDSKRYLGKGVLQAVDNVNMIIAPEVIGMDATAQIDIDQLMIDLDNTPNKAKLGANAIMGVSLATARAAATHLAIPLYQYIGGVNAREIPVPMMNILNGGKHADNNVDIQEFMIVPSGAPNFAEGLRMGVEVYHSLKKVLNNKGLGSGVGDEGGFAPNLPSNEAALDLILEAIAAAGYQAGSDINLALDVAATELFKDGKYHLASSGQVLSSSEMVDFYAQMLEKYPLISLEDGLAEDDWDGWKQLTERLGSKIQLVGDDLFVTNSQRLARGIEEGVCNSILIKVNQIGTLSETLNTIEMARRAGYTCVISHRSGETEDSTIADIAVATNAGQIKTGAPARSDRVAKYNQLLRIEEELDVFAVYRGIKAFKR</sequence>
<proteinExistence type="inferred from homology"/>
<organism>
    <name type="scientific">Syntrophomonas wolfei subsp. wolfei (strain DSM 2245B / Goettingen)</name>
    <dbReference type="NCBI Taxonomy" id="335541"/>
    <lineage>
        <taxon>Bacteria</taxon>
        <taxon>Bacillati</taxon>
        <taxon>Bacillota</taxon>
        <taxon>Clostridia</taxon>
        <taxon>Eubacteriales</taxon>
        <taxon>Syntrophomonadaceae</taxon>
        <taxon>Syntrophomonas</taxon>
    </lineage>
</organism>
<reference key="1">
    <citation type="journal article" date="2010" name="Environ. Microbiol.">
        <title>The genome of Syntrophomonas wolfei: new insights into syntrophic metabolism and biohydrogen production.</title>
        <authorList>
            <person name="Sieber J.R."/>
            <person name="Sims D.R."/>
            <person name="Han C."/>
            <person name="Kim E."/>
            <person name="Lykidis A."/>
            <person name="Lapidus A.L."/>
            <person name="McDonnald E."/>
            <person name="Rohlin L."/>
            <person name="Culley D.E."/>
            <person name="Gunsalus R."/>
            <person name="McInerney M.J."/>
        </authorList>
    </citation>
    <scope>NUCLEOTIDE SEQUENCE [LARGE SCALE GENOMIC DNA]</scope>
    <source>
        <strain>DSM 2245B / Goettingen</strain>
    </source>
</reference>
<comment type="function">
    <text evidence="1">Catalyzes the reversible conversion of 2-phosphoglycerate (2-PG) into phosphoenolpyruvate (PEP). It is essential for the degradation of carbohydrates via glycolysis.</text>
</comment>
<comment type="catalytic activity">
    <reaction evidence="1">
        <text>(2R)-2-phosphoglycerate = phosphoenolpyruvate + H2O</text>
        <dbReference type="Rhea" id="RHEA:10164"/>
        <dbReference type="ChEBI" id="CHEBI:15377"/>
        <dbReference type="ChEBI" id="CHEBI:58289"/>
        <dbReference type="ChEBI" id="CHEBI:58702"/>
        <dbReference type="EC" id="4.2.1.11"/>
    </reaction>
</comment>
<comment type="cofactor">
    <cofactor evidence="1">
        <name>Mg(2+)</name>
        <dbReference type="ChEBI" id="CHEBI:18420"/>
    </cofactor>
    <text evidence="1">Binds a second Mg(2+) ion via substrate during catalysis.</text>
</comment>
<comment type="pathway">
    <text evidence="1">Carbohydrate degradation; glycolysis; pyruvate from D-glyceraldehyde 3-phosphate: step 4/5.</text>
</comment>
<comment type="subcellular location">
    <subcellularLocation>
        <location evidence="1">Cytoplasm</location>
    </subcellularLocation>
    <subcellularLocation>
        <location evidence="1">Secreted</location>
    </subcellularLocation>
    <subcellularLocation>
        <location evidence="1">Cell surface</location>
    </subcellularLocation>
    <text evidence="1">Fractions of enolase are present in both the cytoplasm and on the cell surface.</text>
</comment>
<comment type="similarity">
    <text evidence="1">Belongs to the enolase family.</text>
</comment>
<dbReference type="EC" id="4.2.1.11" evidence="1"/>
<dbReference type="EMBL" id="CP000448">
    <property type="protein sequence ID" value="ABI67624.1"/>
    <property type="molecule type" value="Genomic_DNA"/>
</dbReference>
<dbReference type="RefSeq" id="WP_011639733.1">
    <property type="nucleotide sequence ID" value="NC_008346.1"/>
</dbReference>
<dbReference type="SMR" id="Q0B080"/>
<dbReference type="STRING" id="335541.Swol_0276"/>
<dbReference type="KEGG" id="swo:Swol_0276"/>
<dbReference type="eggNOG" id="COG0148">
    <property type="taxonomic scope" value="Bacteria"/>
</dbReference>
<dbReference type="HOGENOM" id="CLU_031223_2_1_9"/>
<dbReference type="OrthoDB" id="9804716at2"/>
<dbReference type="UniPathway" id="UPA00109">
    <property type="reaction ID" value="UER00187"/>
</dbReference>
<dbReference type="Proteomes" id="UP000001968">
    <property type="component" value="Chromosome"/>
</dbReference>
<dbReference type="GO" id="GO:0009986">
    <property type="term" value="C:cell surface"/>
    <property type="evidence" value="ECO:0007669"/>
    <property type="project" value="UniProtKB-SubCell"/>
</dbReference>
<dbReference type="GO" id="GO:0005576">
    <property type="term" value="C:extracellular region"/>
    <property type="evidence" value="ECO:0007669"/>
    <property type="project" value="UniProtKB-SubCell"/>
</dbReference>
<dbReference type="GO" id="GO:0000015">
    <property type="term" value="C:phosphopyruvate hydratase complex"/>
    <property type="evidence" value="ECO:0007669"/>
    <property type="project" value="InterPro"/>
</dbReference>
<dbReference type="GO" id="GO:0000287">
    <property type="term" value="F:magnesium ion binding"/>
    <property type="evidence" value="ECO:0007669"/>
    <property type="project" value="UniProtKB-UniRule"/>
</dbReference>
<dbReference type="GO" id="GO:0004634">
    <property type="term" value="F:phosphopyruvate hydratase activity"/>
    <property type="evidence" value="ECO:0007669"/>
    <property type="project" value="UniProtKB-UniRule"/>
</dbReference>
<dbReference type="GO" id="GO:0006096">
    <property type="term" value="P:glycolytic process"/>
    <property type="evidence" value="ECO:0007669"/>
    <property type="project" value="UniProtKB-UniRule"/>
</dbReference>
<dbReference type="CDD" id="cd03313">
    <property type="entry name" value="enolase"/>
    <property type="match status" value="1"/>
</dbReference>
<dbReference type="FunFam" id="3.20.20.120:FF:000001">
    <property type="entry name" value="Enolase"/>
    <property type="match status" value="1"/>
</dbReference>
<dbReference type="FunFam" id="3.30.390.10:FF:000001">
    <property type="entry name" value="Enolase"/>
    <property type="match status" value="1"/>
</dbReference>
<dbReference type="Gene3D" id="3.20.20.120">
    <property type="entry name" value="Enolase-like C-terminal domain"/>
    <property type="match status" value="1"/>
</dbReference>
<dbReference type="Gene3D" id="3.30.390.10">
    <property type="entry name" value="Enolase-like, N-terminal domain"/>
    <property type="match status" value="1"/>
</dbReference>
<dbReference type="HAMAP" id="MF_00318">
    <property type="entry name" value="Enolase"/>
    <property type="match status" value="1"/>
</dbReference>
<dbReference type="InterPro" id="IPR000941">
    <property type="entry name" value="Enolase"/>
</dbReference>
<dbReference type="InterPro" id="IPR036849">
    <property type="entry name" value="Enolase-like_C_sf"/>
</dbReference>
<dbReference type="InterPro" id="IPR029017">
    <property type="entry name" value="Enolase-like_N"/>
</dbReference>
<dbReference type="InterPro" id="IPR020810">
    <property type="entry name" value="Enolase_C"/>
</dbReference>
<dbReference type="InterPro" id="IPR020809">
    <property type="entry name" value="Enolase_CS"/>
</dbReference>
<dbReference type="InterPro" id="IPR020811">
    <property type="entry name" value="Enolase_N"/>
</dbReference>
<dbReference type="NCBIfam" id="TIGR01060">
    <property type="entry name" value="eno"/>
    <property type="match status" value="1"/>
</dbReference>
<dbReference type="PANTHER" id="PTHR11902">
    <property type="entry name" value="ENOLASE"/>
    <property type="match status" value="1"/>
</dbReference>
<dbReference type="PANTHER" id="PTHR11902:SF1">
    <property type="entry name" value="ENOLASE"/>
    <property type="match status" value="1"/>
</dbReference>
<dbReference type="Pfam" id="PF00113">
    <property type="entry name" value="Enolase_C"/>
    <property type="match status" value="1"/>
</dbReference>
<dbReference type="Pfam" id="PF03952">
    <property type="entry name" value="Enolase_N"/>
    <property type="match status" value="1"/>
</dbReference>
<dbReference type="PIRSF" id="PIRSF001400">
    <property type="entry name" value="Enolase"/>
    <property type="match status" value="1"/>
</dbReference>
<dbReference type="PRINTS" id="PR00148">
    <property type="entry name" value="ENOLASE"/>
</dbReference>
<dbReference type="SFLD" id="SFLDF00002">
    <property type="entry name" value="enolase"/>
    <property type="match status" value="1"/>
</dbReference>
<dbReference type="SFLD" id="SFLDG00178">
    <property type="entry name" value="enolase"/>
    <property type="match status" value="1"/>
</dbReference>
<dbReference type="SMART" id="SM01192">
    <property type="entry name" value="Enolase_C"/>
    <property type="match status" value="1"/>
</dbReference>
<dbReference type="SMART" id="SM01193">
    <property type="entry name" value="Enolase_N"/>
    <property type="match status" value="1"/>
</dbReference>
<dbReference type="SUPFAM" id="SSF51604">
    <property type="entry name" value="Enolase C-terminal domain-like"/>
    <property type="match status" value="1"/>
</dbReference>
<dbReference type="SUPFAM" id="SSF54826">
    <property type="entry name" value="Enolase N-terminal domain-like"/>
    <property type="match status" value="1"/>
</dbReference>
<dbReference type="PROSITE" id="PS00164">
    <property type="entry name" value="ENOLASE"/>
    <property type="match status" value="1"/>
</dbReference>
<evidence type="ECO:0000255" key="1">
    <source>
        <dbReference type="HAMAP-Rule" id="MF_00318"/>
    </source>
</evidence>